<proteinExistence type="evidence at transcript level"/>
<name>MYBA_CHICK</name>
<sequence length="757" mass="86009">MAKRPRTSEEDDDFQYADHDYEISQQRSLKKICNRVKWTRDEDEKLKKLVEQNGTDDWAFIASHLQNRSDFQCQHRWQKVLNPELIKGPWTKEEDQRVIELVQKYGPKRWSLIAKHLKGRIGKQCRERWHNHLNPEVKKSSWTEAEDRVIYEAHKRLGNRWAEIAKLLPGRTDNSIKNHWNSTMRRKVEQEGYLQDGTKSSSERTGSSTLAQKPCVTMEHLHTQNQFYIPVQTHIPVYQYASPEDSCIEHASASANLVQQSFIDDDPDKEKKIKELELLLMSTENEIRRKRLSSQAGSLPGWSGSFVMEDCVPNTLNSLGEQTSEFYSMDETQGTSVQQNSPTKYLAVEANAVLSSLQTIPEFAETLELIESDPLAWSDVTSFDLSEAVASPVKPAPLKLMRIQHNERAAECQFNVSVMLDGKKHSSISGEEEAVFPTTPNLTKYSTPPAILRKKKRLRAGQSPVNELNDGLCNDAINVALKHTPVKTLPFSPSQFFNTCSGNEQFNLENPAFTSTPICGQKVLITTPLHKETTPTDQKENAGFRTPTIRRSLLGSTPRTPTPFKNALAAQEKKYGPLKLTSQPLAFLEEDIREVLKEETGTDIFLKEEDDSVYKSCKQEHNSSKKVRKSLVLDAWEKEELGAQLFTEDSGLDVQSENAYTTSLLMIPLLEIHDNRCNLPSENQDTNSSNKANAVIKKKLNACSSKNIKLEKSLQPNYEWEAVVYGKTEDQLIMTEQARRYLNAYTATSNTSRALIL</sequence>
<gene>
    <name type="primary">MYBL1</name>
    <name type="synonym">AMYB</name>
</gene>
<keyword id="KW-0010">Activator</keyword>
<keyword id="KW-0238">DNA-binding</keyword>
<keyword id="KW-0539">Nucleus</keyword>
<keyword id="KW-1185">Reference proteome</keyword>
<keyword id="KW-0677">Repeat</keyword>
<keyword id="KW-0804">Transcription</keyword>
<keyword id="KW-0805">Transcription regulation</keyword>
<reference key="1">
    <citation type="journal article" date="1994" name="Oncogene">
        <title>The chicken A-myb protein is a transcriptional activator.</title>
        <authorList>
            <person name="Foos G."/>
            <person name="Grimm S."/>
            <person name="Klempnauer K.H."/>
        </authorList>
    </citation>
    <scope>NUCLEOTIDE SEQUENCE [MRNA]</scope>
</reference>
<feature type="chain" id="PRO_0000197056" description="Myb-related protein A">
    <location>
        <begin position="1"/>
        <end position="757"/>
    </location>
</feature>
<feature type="domain" description="HTH myb-type 1" evidence="2">
    <location>
        <begin position="30"/>
        <end position="81"/>
    </location>
</feature>
<feature type="domain" description="HTH myb-type 2" evidence="2">
    <location>
        <begin position="82"/>
        <end position="137"/>
    </location>
</feature>
<feature type="domain" description="HTH myb-type 3" evidence="2">
    <location>
        <begin position="138"/>
        <end position="188"/>
    </location>
</feature>
<feature type="DNA-binding region" description="H-T-H motif" evidence="2">
    <location>
        <begin position="58"/>
        <end position="81"/>
    </location>
</feature>
<feature type="DNA-binding region" description="H-T-H motif" evidence="2">
    <location>
        <begin position="110"/>
        <end position="133"/>
    </location>
</feature>
<feature type="DNA-binding region" description="H-T-H motif" evidence="2">
    <location>
        <begin position="161"/>
        <end position="184"/>
    </location>
</feature>
<feature type="region of interest" description="Disordered" evidence="3">
    <location>
        <begin position="187"/>
        <end position="209"/>
    </location>
</feature>
<feature type="region of interest" description="Transcriptional activation domain" evidence="1">
    <location>
        <begin position="235"/>
        <end position="300"/>
    </location>
</feature>
<feature type="region of interest" description="Negative regulatory domain" evidence="1">
    <location>
        <begin position="303"/>
        <end position="558"/>
    </location>
</feature>
<feature type="compositionally biased region" description="Polar residues" evidence="3">
    <location>
        <begin position="197"/>
        <end position="209"/>
    </location>
</feature>
<evidence type="ECO:0000250" key="1"/>
<evidence type="ECO:0000255" key="2">
    <source>
        <dbReference type="PROSITE-ProRule" id="PRU00625"/>
    </source>
</evidence>
<evidence type="ECO:0000256" key="3">
    <source>
        <dbReference type="SAM" id="MobiDB-lite"/>
    </source>
</evidence>
<comment type="function">
    <text>Strong transcriptional activator; DNA-binding protein that specifically recognize the sequence 5'-YAAC[GT]G-3'. Could have a role in the proliferation and/or differentiation of neurogenic, spermatogenic and B-lymphoid cells.</text>
</comment>
<comment type="subunit">
    <text evidence="1">Component of the DREAM complex.</text>
</comment>
<comment type="subcellular location">
    <subcellularLocation>
        <location>Nucleus</location>
    </subcellularLocation>
</comment>
<comment type="tissue specificity">
    <text>Expressed ubiquitously.</text>
</comment>
<organism>
    <name type="scientific">Gallus gallus</name>
    <name type="common">Chicken</name>
    <dbReference type="NCBI Taxonomy" id="9031"/>
    <lineage>
        <taxon>Eukaryota</taxon>
        <taxon>Metazoa</taxon>
        <taxon>Chordata</taxon>
        <taxon>Craniata</taxon>
        <taxon>Vertebrata</taxon>
        <taxon>Euteleostomi</taxon>
        <taxon>Archelosauria</taxon>
        <taxon>Archosauria</taxon>
        <taxon>Dinosauria</taxon>
        <taxon>Saurischia</taxon>
        <taxon>Theropoda</taxon>
        <taxon>Coelurosauria</taxon>
        <taxon>Aves</taxon>
        <taxon>Neognathae</taxon>
        <taxon>Galloanserae</taxon>
        <taxon>Galliformes</taxon>
        <taxon>Phasianidae</taxon>
        <taxon>Phasianinae</taxon>
        <taxon>Gallus</taxon>
    </lineage>
</organism>
<accession>P52550</accession>
<protein>
    <recommendedName>
        <fullName>Myb-related protein A</fullName>
        <shortName>A-Myb</shortName>
    </recommendedName>
    <alternativeName>
        <fullName>Myb-like protein 1</fullName>
    </alternativeName>
</protein>
<dbReference type="EMBL" id="X79470">
    <property type="protein sequence ID" value="CAA55980.1"/>
    <property type="molecule type" value="mRNA"/>
</dbReference>
<dbReference type="PIR" id="I50667">
    <property type="entry name" value="I50667"/>
</dbReference>
<dbReference type="RefSeq" id="NP_990563.1">
    <property type="nucleotide sequence ID" value="NM_205232.2"/>
</dbReference>
<dbReference type="SMR" id="P52550"/>
<dbReference type="FunCoup" id="P52550">
    <property type="interactions" value="711"/>
</dbReference>
<dbReference type="STRING" id="9031.ENSGALP00000044411"/>
<dbReference type="PaxDb" id="9031-ENSGALP00000024981"/>
<dbReference type="KEGG" id="gga:396158"/>
<dbReference type="VEuPathDB" id="HostDB:geneid_396158"/>
<dbReference type="eggNOG" id="KOG0048">
    <property type="taxonomic scope" value="Eukaryota"/>
</dbReference>
<dbReference type="InParanoid" id="P52550"/>
<dbReference type="OrthoDB" id="2143914at2759"/>
<dbReference type="PhylomeDB" id="P52550"/>
<dbReference type="PRO" id="PR:P52550"/>
<dbReference type="Proteomes" id="UP000000539">
    <property type="component" value="Unassembled WGS sequence"/>
</dbReference>
<dbReference type="GO" id="GO:0005634">
    <property type="term" value="C:nucleus"/>
    <property type="evidence" value="ECO:0000318"/>
    <property type="project" value="GO_Central"/>
</dbReference>
<dbReference type="GO" id="GO:0000981">
    <property type="term" value="F:DNA-binding transcription factor activity, RNA polymerase II-specific"/>
    <property type="evidence" value="ECO:0000318"/>
    <property type="project" value="GO_Central"/>
</dbReference>
<dbReference type="GO" id="GO:0000978">
    <property type="term" value="F:RNA polymerase II cis-regulatory region sequence-specific DNA binding"/>
    <property type="evidence" value="ECO:0000318"/>
    <property type="project" value="GO_Central"/>
</dbReference>
<dbReference type="GO" id="GO:0000278">
    <property type="term" value="P:mitotic cell cycle"/>
    <property type="evidence" value="ECO:0000318"/>
    <property type="project" value="GO_Central"/>
</dbReference>
<dbReference type="GO" id="GO:0045944">
    <property type="term" value="P:positive regulation of transcription by RNA polymerase II"/>
    <property type="evidence" value="ECO:0000318"/>
    <property type="project" value="GO_Central"/>
</dbReference>
<dbReference type="CDD" id="cd00167">
    <property type="entry name" value="SANT"/>
    <property type="match status" value="3"/>
</dbReference>
<dbReference type="FunFam" id="1.10.10.60:FF:000010">
    <property type="entry name" value="Transcriptional activator Myb isoform A"/>
    <property type="match status" value="1"/>
</dbReference>
<dbReference type="FunFam" id="1.10.10.60:FF:000016">
    <property type="entry name" value="Transcriptional activator Myb isoform A"/>
    <property type="match status" value="1"/>
</dbReference>
<dbReference type="FunFam" id="1.10.10.60:FF:000042">
    <property type="entry name" value="Transcriptional activator Myb isoform A"/>
    <property type="match status" value="1"/>
</dbReference>
<dbReference type="Gene3D" id="1.10.10.60">
    <property type="entry name" value="Homeodomain-like"/>
    <property type="match status" value="3"/>
</dbReference>
<dbReference type="InterPro" id="IPR015395">
    <property type="entry name" value="C-myb_C"/>
</dbReference>
<dbReference type="InterPro" id="IPR009057">
    <property type="entry name" value="Homeodomain-like_sf"/>
</dbReference>
<dbReference type="InterPro" id="IPR017930">
    <property type="entry name" value="Myb_dom"/>
</dbReference>
<dbReference type="InterPro" id="IPR050560">
    <property type="entry name" value="MYB_TF"/>
</dbReference>
<dbReference type="InterPro" id="IPR001005">
    <property type="entry name" value="SANT/Myb"/>
</dbReference>
<dbReference type="InterPro" id="IPR012642">
    <property type="entry name" value="Tscrpt_reg_Wos2-domain"/>
</dbReference>
<dbReference type="PANTHER" id="PTHR45614">
    <property type="entry name" value="MYB PROTEIN-RELATED"/>
    <property type="match status" value="1"/>
</dbReference>
<dbReference type="Pfam" id="PF09316">
    <property type="entry name" value="Cmyb_C"/>
    <property type="match status" value="1"/>
</dbReference>
<dbReference type="Pfam" id="PF07988">
    <property type="entry name" value="LMSTEN"/>
    <property type="match status" value="1"/>
</dbReference>
<dbReference type="Pfam" id="PF13921">
    <property type="entry name" value="Myb_DNA-bind_6"/>
    <property type="match status" value="1"/>
</dbReference>
<dbReference type="Pfam" id="PF00249">
    <property type="entry name" value="Myb_DNA-binding"/>
    <property type="match status" value="1"/>
</dbReference>
<dbReference type="SMART" id="SM00717">
    <property type="entry name" value="SANT"/>
    <property type="match status" value="3"/>
</dbReference>
<dbReference type="SUPFAM" id="SSF46689">
    <property type="entry name" value="Homeodomain-like"/>
    <property type="match status" value="2"/>
</dbReference>
<dbReference type="PROSITE" id="PS51294">
    <property type="entry name" value="HTH_MYB"/>
    <property type="match status" value="3"/>
</dbReference>